<protein>
    <recommendedName>
        <fullName>Interleukin-1 receptor antagonist protein</fullName>
        <shortName>IL-1RN</shortName>
        <shortName>IL-1ra</shortName>
        <shortName>IRAP</shortName>
    </recommendedName>
    <alternativeName>
        <fullName>IL1 inhibitor</fullName>
    </alternativeName>
</protein>
<keyword id="KW-1015">Disulfide bond</keyword>
<keyword id="KW-0325">Glycoprotein</keyword>
<keyword id="KW-1185">Reference proteome</keyword>
<keyword id="KW-0964">Secreted</keyword>
<keyword id="KW-0732">Signal</keyword>
<gene>
    <name type="primary">IL1RN</name>
</gene>
<name>IL1RA_BOVIN</name>
<dbReference type="EMBL" id="AB005148">
    <property type="protein sequence ID" value="BAA31854.1"/>
    <property type="molecule type" value="mRNA"/>
</dbReference>
<dbReference type="RefSeq" id="NP_776782.1">
    <property type="nucleotide sequence ID" value="NM_174357.3"/>
</dbReference>
<dbReference type="SMR" id="O77482"/>
<dbReference type="FunCoup" id="O77482">
    <property type="interactions" value="13"/>
</dbReference>
<dbReference type="STRING" id="9913.ENSBTAP00000071338"/>
<dbReference type="GlyCosmos" id="O77482">
    <property type="glycosylation" value="1 site, No reported glycans"/>
</dbReference>
<dbReference type="GlyGen" id="O77482">
    <property type="glycosylation" value="1 site"/>
</dbReference>
<dbReference type="PaxDb" id="9913-ENSBTAP00000026209"/>
<dbReference type="PeptideAtlas" id="O77482"/>
<dbReference type="GeneID" id="281860"/>
<dbReference type="KEGG" id="bta:281860"/>
<dbReference type="CTD" id="3557"/>
<dbReference type="eggNOG" id="ENOG502S5F0">
    <property type="taxonomic scope" value="Eukaryota"/>
</dbReference>
<dbReference type="HOGENOM" id="CLU_095373_2_0_1"/>
<dbReference type="InParanoid" id="O77482"/>
<dbReference type="OrthoDB" id="9274793at2759"/>
<dbReference type="TreeFam" id="TF300203"/>
<dbReference type="Proteomes" id="UP000009136">
    <property type="component" value="Unplaced"/>
</dbReference>
<dbReference type="GO" id="GO:0005615">
    <property type="term" value="C:extracellular space"/>
    <property type="evidence" value="ECO:0000318"/>
    <property type="project" value="GO_Central"/>
</dbReference>
<dbReference type="GO" id="GO:0005125">
    <property type="term" value="F:cytokine activity"/>
    <property type="evidence" value="ECO:0007669"/>
    <property type="project" value="InterPro"/>
</dbReference>
<dbReference type="GO" id="GO:0005152">
    <property type="term" value="F:interleukin-1 receptor antagonist activity"/>
    <property type="evidence" value="ECO:0000318"/>
    <property type="project" value="GO_Central"/>
</dbReference>
<dbReference type="GO" id="GO:0005149">
    <property type="term" value="F:interleukin-1 receptor binding"/>
    <property type="evidence" value="ECO:0007669"/>
    <property type="project" value="InterPro"/>
</dbReference>
<dbReference type="GO" id="GO:0006955">
    <property type="term" value="P:immune response"/>
    <property type="evidence" value="ECO:0000318"/>
    <property type="project" value="GO_Central"/>
</dbReference>
<dbReference type="GO" id="GO:0006954">
    <property type="term" value="P:inflammatory response"/>
    <property type="evidence" value="ECO:0000318"/>
    <property type="project" value="GO_Central"/>
</dbReference>
<dbReference type="GO" id="GO:2000660">
    <property type="term" value="P:negative regulation of interleukin-1-mediated signaling pathway"/>
    <property type="evidence" value="ECO:0000318"/>
    <property type="project" value="GO_Central"/>
</dbReference>
<dbReference type="FunFam" id="2.80.10.50:FF:000013">
    <property type="entry name" value="Interleukin-1"/>
    <property type="match status" value="1"/>
</dbReference>
<dbReference type="Gene3D" id="2.80.10.50">
    <property type="match status" value="1"/>
</dbReference>
<dbReference type="InterPro" id="IPR020877">
    <property type="entry name" value="IL-1_CS"/>
</dbReference>
<dbReference type="InterPro" id="IPR000975">
    <property type="entry name" value="IL-1_fam"/>
</dbReference>
<dbReference type="InterPro" id="IPR003297">
    <property type="entry name" value="IL-1RA/IL-36"/>
</dbReference>
<dbReference type="InterPro" id="IPR008996">
    <property type="entry name" value="IL1/FGF"/>
</dbReference>
<dbReference type="PANTHER" id="PTHR10078">
    <property type="entry name" value="INTERLEUKIN-1 FAMILY MEMBER"/>
    <property type="match status" value="1"/>
</dbReference>
<dbReference type="PANTHER" id="PTHR10078:SF28">
    <property type="entry name" value="INTERLEUKIN-1 RECEPTOR ANTAGONIST PROTEIN"/>
    <property type="match status" value="1"/>
</dbReference>
<dbReference type="Pfam" id="PF00340">
    <property type="entry name" value="IL1"/>
    <property type="match status" value="1"/>
</dbReference>
<dbReference type="PRINTS" id="PR00264">
    <property type="entry name" value="INTERLEUKIN1"/>
</dbReference>
<dbReference type="PRINTS" id="PR01360">
    <property type="entry name" value="INTRLEUKIN1X"/>
</dbReference>
<dbReference type="SMART" id="SM00125">
    <property type="entry name" value="IL1"/>
    <property type="match status" value="1"/>
</dbReference>
<dbReference type="SUPFAM" id="SSF50353">
    <property type="entry name" value="Cytokine"/>
    <property type="match status" value="1"/>
</dbReference>
<dbReference type="PROSITE" id="PS00253">
    <property type="entry name" value="INTERLEUKIN_1"/>
    <property type="match status" value="1"/>
</dbReference>
<comment type="function">
    <text evidence="3">Anti-inflammatory antagonist of interleukin-1 family of proinflammatory cytokines such as interleukin-1beta/IL1B and interleukin-1alpha/IL1A. Protects from immune dysregulation and uncontrolled systemic inflammation triggered by IL1 for a range of innate stimulatory agents such as pathogens.</text>
</comment>
<comment type="subcellular location">
    <subcellularLocation>
        <location evidence="2">Secreted</location>
    </subcellularLocation>
</comment>
<comment type="similarity">
    <text evidence="5">Belongs to the IL-1 family.</text>
</comment>
<organism>
    <name type="scientific">Bos taurus</name>
    <name type="common">Bovine</name>
    <dbReference type="NCBI Taxonomy" id="9913"/>
    <lineage>
        <taxon>Eukaryota</taxon>
        <taxon>Metazoa</taxon>
        <taxon>Chordata</taxon>
        <taxon>Craniata</taxon>
        <taxon>Vertebrata</taxon>
        <taxon>Euteleostomi</taxon>
        <taxon>Mammalia</taxon>
        <taxon>Eutheria</taxon>
        <taxon>Laurasiatheria</taxon>
        <taxon>Artiodactyla</taxon>
        <taxon>Ruminantia</taxon>
        <taxon>Pecora</taxon>
        <taxon>Bovidae</taxon>
        <taxon>Bovinae</taxon>
        <taxon>Bos</taxon>
    </lineage>
</organism>
<evidence type="ECO:0000250" key="1"/>
<evidence type="ECO:0000250" key="2">
    <source>
        <dbReference type="UniProtKB" id="P18510"/>
    </source>
</evidence>
<evidence type="ECO:0000250" key="3">
    <source>
        <dbReference type="UniProtKB" id="P25085"/>
    </source>
</evidence>
<evidence type="ECO:0000255" key="4"/>
<evidence type="ECO:0000305" key="5"/>
<reference key="1">
    <citation type="journal article" date="1998" name="Vet. Immunol. Immunopathol.">
        <title>Enzymatic amplification and expression of bovine interleukin-1 receptor antagonist cDNA.</title>
        <authorList>
            <person name="Kirisawa R."/>
            <person name="Fukuda T."/>
            <person name="Yamanaka H."/>
            <person name="Hagiwara K."/>
            <person name="Goto M."/>
            <person name="Obata Y."/>
            <person name="Yoshino T."/>
            <person name="Iwai H."/>
        </authorList>
    </citation>
    <scope>NUCLEOTIDE SEQUENCE [MRNA]</scope>
</reference>
<sequence length="174" mass="19926">MDIYIHGYLICLLLFLFRSETACHPLGKRRCEMQAFRIWDVNQKIFYLRNNQLVAGYLQGPNTKLEEKIDVVPIEPHTMFLGIHGGKLCLACVKSGDEIKLKLEAVNITDLNQNREQDKRFAFIRFDNGPTTSFESAACPGWFLCTSLEADQPVGLTNMPTEALKVTKFYFQQD</sequence>
<proteinExistence type="evidence at transcript level"/>
<feature type="signal peptide" evidence="1">
    <location>
        <begin position="1"/>
        <end position="23"/>
    </location>
</feature>
<feature type="chain" id="PRO_0000015325" description="Interleukin-1 receptor antagonist protein">
    <location>
        <begin position="24"/>
        <end position="174"/>
    </location>
</feature>
<feature type="glycosylation site" description="N-linked (GlcNAc...) asparagine" evidence="4">
    <location>
        <position position="107"/>
    </location>
</feature>
<feature type="disulfide bond" evidence="1">
    <location>
        <begin position="89"/>
        <end position="139"/>
    </location>
</feature>
<accession>O77482</accession>